<gene>
    <name type="primary">RPL28C</name>
    <name type="ordered locus">At4g29410</name>
    <name type="ORF">F17A13.230</name>
</gene>
<comment type="similarity">
    <text evidence="2">Belongs to the eukaryotic ribosomal protein eL28 family.</text>
</comment>
<sequence>MATVPGQLIWEIVKRNNCFLVKQFGRGNAKVQFSKESNNLVNINSYKHSGLANKKTVTIQAAGKDQGVVLGTTKTKRQNKPKLSVNKSILKKEFSRMSKVVANQVVDNYYRPDLKKAALARLSAISKGLRVAKSGPKRRNRQA</sequence>
<proteinExistence type="evidence at transcript level"/>
<protein>
    <recommendedName>
        <fullName evidence="1">Large ribosomal subunit protein eL28y</fullName>
    </recommendedName>
    <alternativeName>
        <fullName>60S ribosomal protein L28-2</fullName>
    </alternativeName>
</protein>
<name>RL282_ARATH</name>
<organism>
    <name type="scientific">Arabidopsis thaliana</name>
    <name type="common">Mouse-ear cress</name>
    <dbReference type="NCBI Taxonomy" id="3702"/>
    <lineage>
        <taxon>Eukaryota</taxon>
        <taxon>Viridiplantae</taxon>
        <taxon>Streptophyta</taxon>
        <taxon>Embryophyta</taxon>
        <taxon>Tracheophyta</taxon>
        <taxon>Spermatophyta</taxon>
        <taxon>Magnoliopsida</taxon>
        <taxon>eudicotyledons</taxon>
        <taxon>Gunneridae</taxon>
        <taxon>Pentapetalae</taxon>
        <taxon>rosids</taxon>
        <taxon>malvids</taxon>
        <taxon>Brassicales</taxon>
        <taxon>Brassicaceae</taxon>
        <taxon>Camelineae</taxon>
        <taxon>Arabidopsis</taxon>
    </lineage>
</organism>
<dbReference type="EMBL" id="AL096692">
    <property type="status" value="NOT_ANNOTATED_CDS"/>
    <property type="molecule type" value="Genomic_DNA"/>
</dbReference>
<dbReference type="EMBL" id="AL161574">
    <property type="protein sequence ID" value="CAB79699.1"/>
    <property type="molecule type" value="Genomic_DNA"/>
</dbReference>
<dbReference type="EMBL" id="CP002687">
    <property type="protein sequence ID" value="AEE85627.1"/>
    <property type="molecule type" value="Genomic_DNA"/>
</dbReference>
<dbReference type="EMBL" id="CP002687">
    <property type="protein sequence ID" value="AEE85628.1"/>
    <property type="molecule type" value="Genomic_DNA"/>
</dbReference>
<dbReference type="EMBL" id="AY072328">
    <property type="protein sequence ID" value="AAL61935.1"/>
    <property type="molecule type" value="mRNA"/>
</dbReference>
<dbReference type="EMBL" id="BT000047">
    <property type="protein sequence ID" value="AAN15366.1"/>
    <property type="molecule type" value="mRNA"/>
</dbReference>
<dbReference type="EMBL" id="AY088304">
    <property type="protein sequence ID" value="AAM65843.1"/>
    <property type="molecule type" value="mRNA"/>
</dbReference>
<dbReference type="PIR" id="B85343">
    <property type="entry name" value="B85343"/>
</dbReference>
<dbReference type="RefSeq" id="NP_001078470.1">
    <property type="nucleotide sequence ID" value="NM_001085001.1"/>
</dbReference>
<dbReference type="RefSeq" id="NP_194670.1">
    <property type="nucleotide sequence ID" value="NM_119086.4"/>
</dbReference>
<dbReference type="SMR" id="Q9M0E2"/>
<dbReference type="BioGRID" id="14349">
    <property type="interactions" value="2"/>
</dbReference>
<dbReference type="FunCoup" id="Q9M0E2">
    <property type="interactions" value="3473"/>
</dbReference>
<dbReference type="IntAct" id="Q9M0E2">
    <property type="interactions" value="1"/>
</dbReference>
<dbReference type="STRING" id="3702.Q9M0E2"/>
<dbReference type="MetOSite" id="Q9M0E2"/>
<dbReference type="PaxDb" id="3702-AT4G29410.1"/>
<dbReference type="ProteomicsDB" id="236541"/>
<dbReference type="EnsemblPlants" id="AT4G29410.1">
    <property type="protein sequence ID" value="AT4G29410.1"/>
    <property type="gene ID" value="AT4G29410"/>
</dbReference>
<dbReference type="EnsemblPlants" id="AT4G29410.2">
    <property type="protein sequence ID" value="AT4G29410.2"/>
    <property type="gene ID" value="AT4G29410"/>
</dbReference>
<dbReference type="GeneID" id="829062"/>
<dbReference type="Gramene" id="AT4G29410.1">
    <property type="protein sequence ID" value="AT4G29410.1"/>
    <property type="gene ID" value="AT4G29410"/>
</dbReference>
<dbReference type="Gramene" id="AT4G29410.2">
    <property type="protein sequence ID" value="AT4G29410.2"/>
    <property type="gene ID" value="AT4G29410"/>
</dbReference>
<dbReference type="KEGG" id="ath:AT4G29410"/>
<dbReference type="Araport" id="AT4G29410"/>
<dbReference type="TAIR" id="AT4G29410"/>
<dbReference type="eggNOG" id="KOG3412">
    <property type="taxonomic scope" value="Eukaryota"/>
</dbReference>
<dbReference type="HOGENOM" id="CLU_106801_2_0_1"/>
<dbReference type="InParanoid" id="Q9M0E2"/>
<dbReference type="OMA" id="FGGIQFN"/>
<dbReference type="OrthoDB" id="338850at2759"/>
<dbReference type="PhylomeDB" id="Q9M0E2"/>
<dbReference type="PRO" id="PR:Q9M0E2"/>
<dbReference type="Proteomes" id="UP000006548">
    <property type="component" value="Chromosome 4"/>
</dbReference>
<dbReference type="ExpressionAtlas" id="Q9M0E2">
    <property type="expression patterns" value="baseline and differential"/>
</dbReference>
<dbReference type="GO" id="GO:0022625">
    <property type="term" value="C:cytosolic large ribosomal subunit"/>
    <property type="evidence" value="ECO:0007005"/>
    <property type="project" value="TAIR"/>
</dbReference>
<dbReference type="GO" id="GO:0005886">
    <property type="term" value="C:plasma membrane"/>
    <property type="evidence" value="ECO:0007005"/>
    <property type="project" value="TAIR"/>
</dbReference>
<dbReference type="GO" id="GO:0009506">
    <property type="term" value="C:plasmodesma"/>
    <property type="evidence" value="ECO:0007005"/>
    <property type="project" value="TAIR"/>
</dbReference>
<dbReference type="GO" id="GO:0003729">
    <property type="term" value="F:mRNA binding"/>
    <property type="evidence" value="ECO:0000314"/>
    <property type="project" value="TAIR"/>
</dbReference>
<dbReference type="GO" id="GO:0003735">
    <property type="term" value="F:structural constituent of ribosome"/>
    <property type="evidence" value="ECO:0000314"/>
    <property type="project" value="CAFA"/>
</dbReference>
<dbReference type="GO" id="GO:0000976">
    <property type="term" value="F:transcription cis-regulatory region binding"/>
    <property type="evidence" value="ECO:0000353"/>
    <property type="project" value="TAIR"/>
</dbReference>
<dbReference type="GO" id="GO:0006412">
    <property type="term" value="P:translation"/>
    <property type="evidence" value="ECO:0007669"/>
    <property type="project" value="InterPro"/>
</dbReference>
<dbReference type="FunFam" id="3.30.390.110:FF:000002">
    <property type="entry name" value="60S ribosomal protein L28"/>
    <property type="match status" value="1"/>
</dbReference>
<dbReference type="Gene3D" id="3.30.390.110">
    <property type="match status" value="1"/>
</dbReference>
<dbReference type="InterPro" id="IPR002672">
    <property type="entry name" value="Ribosomal_eL28"/>
</dbReference>
<dbReference type="InterPro" id="IPR029004">
    <property type="entry name" value="Ribosomal_eL28/Mak16"/>
</dbReference>
<dbReference type="PANTHER" id="PTHR10544">
    <property type="entry name" value="60S RIBOSOMAL PROTEIN L28"/>
    <property type="match status" value="1"/>
</dbReference>
<dbReference type="Pfam" id="PF01778">
    <property type="entry name" value="Ribosomal_L28e"/>
    <property type="match status" value="1"/>
</dbReference>
<feature type="chain" id="PRO_0000244744" description="Large ribosomal subunit protein eL28y">
    <location>
        <begin position="1"/>
        <end position="143"/>
    </location>
</feature>
<evidence type="ECO:0000303" key="1">
    <source>
    </source>
</evidence>
<evidence type="ECO:0000305" key="2"/>
<reference key="1">
    <citation type="journal article" date="1999" name="Nature">
        <title>Sequence and analysis of chromosome 4 of the plant Arabidopsis thaliana.</title>
        <authorList>
            <person name="Mayer K.F.X."/>
            <person name="Schueller C."/>
            <person name="Wambutt R."/>
            <person name="Murphy G."/>
            <person name="Volckaert G."/>
            <person name="Pohl T."/>
            <person name="Duesterhoeft A."/>
            <person name="Stiekema W."/>
            <person name="Entian K.-D."/>
            <person name="Terryn N."/>
            <person name="Harris B."/>
            <person name="Ansorge W."/>
            <person name="Brandt P."/>
            <person name="Grivell L.A."/>
            <person name="Rieger M."/>
            <person name="Weichselgartner M."/>
            <person name="de Simone V."/>
            <person name="Obermaier B."/>
            <person name="Mache R."/>
            <person name="Mueller M."/>
            <person name="Kreis M."/>
            <person name="Delseny M."/>
            <person name="Puigdomenech P."/>
            <person name="Watson M."/>
            <person name="Schmidtheini T."/>
            <person name="Reichert B."/>
            <person name="Portetelle D."/>
            <person name="Perez-Alonso M."/>
            <person name="Boutry M."/>
            <person name="Bancroft I."/>
            <person name="Vos P."/>
            <person name="Hoheisel J."/>
            <person name="Zimmermann W."/>
            <person name="Wedler H."/>
            <person name="Ridley P."/>
            <person name="Langham S.-A."/>
            <person name="McCullagh B."/>
            <person name="Bilham L."/>
            <person name="Robben J."/>
            <person name="van der Schueren J."/>
            <person name="Grymonprez B."/>
            <person name="Chuang Y.-J."/>
            <person name="Vandenbussche F."/>
            <person name="Braeken M."/>
            <person name="Weltjens I."/>
            <person name="Voet M."/>
            <person name="Bastiaens I."/>
            <person name="Aert R."/>
            <person name="Defoor E."/>
            <person name="Weitzenegger T."/>
            <person name="Bothe G."/>
            <person name="Ramsperger U."/>
            <person name="Hilbert H."/>
            <person name="Braun M."/>
            <person name="Holzer E."/>
            <person name="Brandt A."/>
            <person name="Peters S."/>
            <person name="van Staveren M."/>
            <person name="Dirkse W."/>
            <person name="Mooijman P."/>
            <person name="Klein Lankhorst R."/>
            <person name="Rose M."/>
            <person name="Hauf J."/>
            <person name="Koetter P."/>
            <person name="Berneiser S."/>
            <person name="Hempel S."/>
            <person name="Feldpausch M."/>
            <person name="Lamberth S."/>
            <person name="Van den Daele H."/>
            <person name="De Keyser A."/>
            <person name="Buysshaert C."/>
            <person name="Gielen J."/>
            <person name="Villarroel R."/>
            <person name="De Clercq R."/>
            <person name="van Montagu M."/>
            <person name="Rogers J."/>
            <person name="Cronin A."/>
            <person name="Quail M.A."/>
            <person name="Bray-Allen S."/>
            <person name="Clark L."/>
            <person name="Doggett J."/>
            <person name="Hall S."/>
            <person name="Kay M."/>
            <person name="Lennard N."/>
            <person name="McLay K."/>
            <person name="Mayes R."/>
            <person name="Pettett A."/>
            <person name="Rajandream M.A."/>
            <person name="Lyne M."/>
            <person name="Benes V."/>
            <person name="Rechmann S."/>
            <person name="Borkova D."/>
            <person name="Bloecker H."/>
            <person name="Scharfe M."/>
            <person name="Grimm M."/>
            <person name="Loehnert T.-H."/>
            <person name="Dose S."/>
            <person name="de Haan M."/>
            <person name="Maarse A.C."/>
            <person name="Schaefer M."/>
            <person name="Mueller-Auer S."/>
            <person name="Gabel C."/>
            <person name="Fuchs M."/>
            <person name="Fartmann B."/>
            <person name="Granderath K."/>
            <person name="Dauner D."/>
            <person name="Herzl A."/>
            <person name="Neumann S."/>
            <person name="Argiriou A."/>
            <person name="Vitale D."/>
            <person name="Liguori R."/>
            <person name="Piravandi E."/>
            <person name="Massenet O."/>
            <person name="Quigley F."/>
            <person name="Clabauld G."/>
            <person name="Muendlein A."/>
            <person name="Felber R."/>
            <person name="Schnabl S."/>
            <person name="Hiller R."/>
            <person name="Schmidt W."/>
            <person name="Lecharny A."/>
            <person name="Aubourg S."/>
            <person name="Chefdor F."/>
            <person name="Cooke R."/>
            <person name="Berger C."/>
            <person name="Monfort A."/>
            <person name="Casacuberta E."/>
            <person name="Gibbons T."/>
            <person name="Weber N."/>
            <person name="Vandenbol M."/>
            <person name="Bargues M."/>
            <person name="Terol J."/>
            <person name="Torres A."/>
            <person name="Perez-Perez A."/>
            <person name="Purnelle B."/>
            <person name="Bent E."/>
            <person name="Johnson S."/>
            <person name="Tacon D."/>
            <person name="Jesse T."/>
            <person name="Heijnen L."/>
            <person name="Schwarz S."/>
            <person name="Scholler P."/>
            <person name="Heber S."/>
            <person name="Francs P."/>
            <person name="Bielke C."/>
            <person name="Frishman D."/>
            <person name="Haase D."/>
            <person name="Lemcke K."/>
            <person name="Mewes H.-W."/>
            <person name="Stocker S."/>
            <person name="Zaccaria P."/>
            <person name="Bevan M."/>
            <person name="Wilson R.K."/>
            <person name="de la Bastide M."/>
            <person name="Habermann K."/>
            <person name="Parnell L."/>
            <person name="Dedhia N."/>
            <person name="Gnoj L."/>
            <person name="Schutz K."/>
            <person name="Huang E."/>
            <person name="Spiegel L."/>
            <person name="Sekhon M."/>
            <person name="Murray J."/>
            <person name="Sheet P."/>
            <person name="Cordes M."/>
            <person name="Abu-Threideh J."/>
            <person name="Stoneking T."/>
            <person name="Kalicki J."/>
            <person name="Graves T."/>
            <person name="Harmon G."/>
            <person name="Edwards J."/>
            <person name="Latreille P."/>
            <person name="Courtney L."/>
            <person name="Cloud J."/>
            <person name="Abbott A."/>
            <person name="Scott K."/>
            <person name="Johnson D."/>
            <person name="Minx P."/>
            <person name="Bentley D."/>
            <person name="Fulton B."/>
            <person name="Miller N."/>
            <person name="Greco T."/>
            <person name="Kemp K."/>
            <person name="Kramer J."/>
            <person name="Fulton L."/>
            <person name="Mardis E."/>
            <person name="Dante M."/>
            <person name="Pepin K."/>
            <person name="Hillier L.W."/>
            <person name="Nelson J."/>
            <person name="Spieth J."/>
            <person name="Ryan E."/>
            <person name="Andrews S."/>
            <person name="Geisel C."/>
            <person name="Layman D."/>
            <person name="Du H."/>
            <person name="Ali J."/>
            <person name="Berghoff A."/>
            <person name="Jones K."/>
            <person name="Drone K."/>
            <person name="Cotton M."/>
            <person name="Joshu C."/>
            <person name="Antonoiu B."/>
            <person name="Zidanic M."/>
            <person name="Strong C."/>
            <person name="Sun H."/>
            <person name="Lamar B."/>
            <person name="Yordan C."/>
            <person name="Ma P."/>
            <person name="Zhong J."/>
            <person name="Preston R."/>
            <person name="Vil D."/>
            <person name="Shekher M."/>
            <person name="Matero A."/>
            <person name="Shah R."/>
            <person name="Swaby I.K."/>
            <person name="O'Shaughnessy A."/>
            <person name="Rodriguez M."/>
            <person name="Hoffman J."/>
            <person name="Till S."/>
            <person name="Granat S."/>
            <person name="Shohdy N."/>
            <person name="Hasegawa A."/>
            <person name="Hameed A."/>
            <person name="Lodhi M."/>
            <person name="Johnson A."/>
            <person name="Chen E."/>
            <person name="Marra M.A."/>
            <person name="Martienssen R."/>
            <person name="McCombie W.R."/>
        </authorList>
    </citation>
    <scope>NUCLEOTIDE SEQUENCE [LARGE SCALE GENOMIC DNA]</scope>
    <source>
        <strain>cv. Columbia</strain>
    </source>
</reference>
<reference key="2">
    <citation type="journal article" date="2017" name="Plant J.">
        <title>Araport11: a complete reannotation of the Arabidopsis thaliana reference genome.</title>
        <authorList>
            <person name="Cheng C.Y."/>
            <person name="Krishnakumar V."/>
            <person name="Chan A.P."/>
            <person name="Thibaud-Nissen F."/>
            <person name="Schobel S."/>
            <person name="Town C.D."/>
        </authorList>
    </citation>
    <scope>GENOME REANNOTATION</scope>
    <source>
        <strain>cv. Columbia</strain>
    </source>
</reference>
<reference key="3">
    <citation type="journal article" date="2003" name="Science">
        <title>Empirical analysis of transcriptional activity in the Arabidopsis genome.</title>
        <authorList>
            <person name="Yamada K."/>
            <person name="Lim J."/>
            <person name="Dale J.M."/>
            <person name="Chen H."/>
            <person name="Shinn P."/>
            <person name="Palm C.J."/>
            <person name="Southwick A.M."/>
            <person name="Wu H.C."/>
            <person name="Kim C.J."/>
            <person name="Nguyen M."/>
            <person name="Pham P.K."/>
            <person name="Cheuk R.F."/>
            <person name="Karlin-Newmann G."/>
            <person name="Liu S.X."/>
            <person name="Lam B."/>
            <person name="Sakano H."/>
            <person name="Wu T."/>
            <person name="Yu G."/>
            <person name="Miranda M."/>
            <person name="Quach H.L."/>
            <person name="Tripp M."/>
            <person name="Chang C.H."/>
            <person name="Lee J.M."/>
            <person name="Toriumi M.J."/>
            <person name="Chan M.M."/>
            <person name="Tang C.C."/>
            <person name="Onodera C.S."/>
            <person name="Deng J.M."/>
            <person name="Akiyama K."/>
            <person name="Ansari Y."/>
            <person name="Arakawa T."/>
            <person name="Banh J."/>
            <person name="Banno F."/>
            <person name="Bowser L."/>
            <person name="Brooks S.Y."/>
            <person name="Carninci P."/>
            <person name="Chao Q."/>
            <person name="Choy N."/>
            <person name="Enju A."/>
            <person name="Goldsmith A.D."/>
            <person name="Gurjal M."/>
            <person name="Hansen N.F."/>
            <person name="Hayashizaki Y."/>
            <person name="Johnson-Hopson C."/>
            <person name="Hsuan V.W."/>
            <person name="Iida K."/>
            <person name="Karnes M."/>
            <person name="Khan S."/>
            <person name="Koesema E."/>
            <person name="Ishida J."/>
            <person name="Jiang P.X."/>
            <person name="Jones T."/>
            <person name="Kawai J."/>
            <person name="Kamiya A."/>
            <person name="Meyers C."/>
            <person name="Nakajima M."/>
            <person name="Narusaka M."/>
            <person name="Seki M."/>
            <person name="Sakurai T."/>
            <person name="Satou M."/>
            <person name="Tamse R."/>
            <person name="Vaysberg M."/>
            <person name="Wallender E.K."/>
            <person name="Wong C."/>
            <person name="Yamamura Y."/>
            <person name="Yuan S."/>
            <person name="Shinozaki K."/>
            <person name="Davis R.W."/>
            <person name="Theologis A."/>
            <person name="Ecker J.R."/>
        </authorList>
    </citation>
    <scope>NUCLEOTIDE SEQUENCE [LARGE SCALE MRNA]</scope>
    <source>
        <strain>cv. Columbia</strain>
    </source>
</reference>
<reference key="4">
    <citation type="submission" date="2002-03" db="EMBL/GenBank/DDBJ databases">
        <title>Full-length cDNA from Arabidopsis thaliana.</title>
        <authorList>
            <person name="Brover V.V."/>
            <person name="Troukhan M.E."/>
            <person name="Alexandrov N.A."/>
            <person name="Lu Y.-P."/>
            <person name="Flavell R.B."/>
            <person name="Feldmann K.A."/>
        </authorList>
    </citation>
    <scope>NUCLEOTIDE SEQUENCE [LARGE SCALE MRNA]</scope>
</reference>
<reference key="5">
    <citation type="journal article" date="2001" name="Plant Physiol.">
        <title>The organization of cytoplasmic ribosomal protein genes in the Arabidopsis genome.</title>
        <authorList>
            <person name="Barakat A."/>
            <person name="Szick-Miranda K."/>
            <person name="Chang I.-F."/>
            <person name="Guyot R."/>
            <person name="Blanc G."/>
            <person name="Cooke R."/>
            <person name="Delseny M."/>
            <person name="Bailey-Serres J."/>
        </authorList>
    </citation>
    <scope>GENE FAMILY ORGANIZATION</scope>
    <scope>NOMENCLATURE</scope>
</reference>
<reference key="6">
    <citation type="journal article" date="2023" name="Plant Cell">
        <title>An updated nomenclature for plant ribosomal protein genes.</title>
        <authorList>
            <person name="Scarpin M.R."/>
            <person name="Busche M."/>
            <person name="Martinez R.E."/>
            <person name="Harper L.C."/>
            <person name="Reiser L."/>
            <person name="Szakonyi D."/>
            <person name="Merchante C."/>
            <person name="Lan T."/>
            <person name="Xiong W."/>
            <person name="Mo B."/>
            <person name="Tang G."/>
            <person name="Chen X."/>
            <person name="Bailey-Serres J."/>
            <person name="Browning K.S."/>
            <person name="Brunkard J.O."/>
        </authorList>
    </citation>
    <scope>NOMENCLATURE</scope>
</reference>
<accession>Q9M0E2</accession>
<keyword id="KW-1185">Reference proteome</keyword>
<keyword id="KW-0687">Ribonucleoprotein</keyword>
<keyword id="KW-0689">Ribosomal protein</keyword>